<accession>B1ITQ5</accession>
<protein>
    <recommendedName>
        <fullName evidence="1">Chaperonin GroEL</fullName>
        <ecNumber evidence="1">5.6.1.7</ecNumber>
    </recommendedName>
    <alternativeName>
        <fullName evidence="1">60 kDa chaperonin</fullName>
    </alternativeName>
    <alternativeName>
        <fullName evidence="1">Chaperonin-60</fullName>
        <shortName evidence="1">Cpn60</shortName>
    </alternativeName>
</protein>
<reference key="1">
    <citation type="submission" date="2008-02" db="EMBL/GenBank/DDBJ databases">
        <title>Complete sequence of Escherichia coli C str. ATCC 8739.</title>
        <authorList>
            <person name="Copeland A."/>
            <person name="Lucas S."/>
            <person name="Lapidus A."/>
            <person name="Glavina del Rio T."/>
            <person name="Dalin E."/>
            <person name="Tice H."/>
            <person name="Bruce D."/>
            <person name="Goodwin L."/>
            <person name="Pitluck S."/>
            <person name="Kiss H."/>
            <person name="Brettin T."/>
            <person name="Detter J.C."/>
            <person name="Han C."/>
            <person name="Kuske C.R."/>
            <person name="Schmutz J."/>
            <person name="Larimer F."/>
            <person name="Land M."/>
            <person name="Hauser L."/>
            <person name="Kyrpides N."/>
            <person name="Mikhailova N."/>
            <person name="Ingram L."/>
            <person name="Richardson P."/>
        </authorList>
    </citation>
    <scope>NUCLEOTIDE SEQUENCE [LARGE SCALE GENOMIC DNA]</scope>
    <source>
        <strain>ATCC 8739 / DSM 1576 / NBRC 3972 / NCIMB 8545 / WDCM 00012 / Crooks</strain>
    </source>
</reference>
<proteinExistence type="inferred from homology"/>
<name>CH60_ECOLC</name>
<evidence type="ECO:0000255" key="1">
    <source>
        <dbReference type="HAMAP-Rule" id="MF_00600"/>
    </source>
</evidence>
<keyword id="KW-0067">ATP-binding</keyword>
<keyword id="KW-0143">Chaperone</keyword>
<keyword id="KW-0963">Cytoplasm</keyword>
<keyword id="KW-0413">Isomerase</keyword>
<keyword id="KW-0547">Nucleotide-binding</keyword>
<sequence>MAAKDVKFGNDARVKMLRGVNVLADAVKVTLGPKGRNVVLDKSFGAPTITKDGVSVAREIELEDKFENMGAQMVKEVASKANDAAGDGTTTATVLAQAIITEGLKAVAAGMNPMDLKRGIDKAVTAAVEELKALSVPCSDSKAIAQVGTISANSDETVGKLIAEAMDKVGKEGVITVEDGTGLQDELDVVEGMQFDRGYLSPYFINKPETGAVELESPFILLADKKISNIREMLPVLEAVAKAGKPLLIIAEDVEGEALATLVVNTMRGIVKVAAVKAPGFGDRRKAMLQDIATLTGGTVISEEIGMELEKATLEDLGQAKRVVINKDTTTIIDGVGEEAAIQGRVAQIRQQIEEATSDYDREKLQERVAKLAGGVAVIKVGAATEVEMKEKKARVEDALHATRAAVEEGVVAGGGVALIRVASKLADLRGQNEDQNVGIKVALRAMEAPLRQIVLNCGEEPSVVANTVKGGDGNYGYNAATEEYGNMIDMGILDPTKVTRSALQYAASVAGLMITTECMVTDLPKNDAADLGAAGGMGGMGGMGGMM</sequence>
<feature type="chain" id="PRO_1000082474" description="Chaperonin GroEL">
    <location>
        <begin position="1"/>
        <end position="548"/>
    </location>
</feature>
<feature type="binding site" evidence="1">
    <location>
        <begin position="30"/>
        <end position="33"/>
    </location>
    <ligand>
        <name>ATP</name>
        <dbReference type="ChEBI" id="CHEBI:30616"/>
    </ligand>
</feature>
<feature type="binding site" evidence="1">
    <location>
        <position position="51"/>
    </location>
    <ligand>
        <name>ATP</name>
        <dbReference type="ChEBI" id="CHEBI:30616"/>
    </ligand>
</feature>
<feature type="binding site" evidence="1">
    <location>
        <begin position="87"/>
        <end position="91"/>
    </location>
    <ligand>
        <name>ATP</name>
        <dbReference type="ChEBI" id="CHEBI:30616"/>
    </ligand>
</feature>
<feature type="binding site" evidence="1">
    <location>
        <position position="415"/>
    </location>
    <ligand>
        <name>ATP</name>
        <dbReference type="ChEBI" id="CHEBI:30616"/>
    </ligand>
</feature>
<feature type="binding site" evidence="1">
    <location>
        <begin position="479"/>
        <end position="481"/>
    </location>
    <ligand>
        <name>ATP</name>
        <dbReference type="ChEBI" id="CHEBI:30616"/>
    </ligand>
</feature>
<feature type="binding site" evidence="1">
    <location>
        <position position="495"/>
    </location>
    <ligand>
        <name>ATP</name>
        <dbReference type="ChEBI" id="CHEBI:30616"/>
    </ligand>
</feature>
<dbReference type="EC" id="5.6.1.7" evidence="1"/>
<dbReference type="EMBL" id="CP000946">
    <property type="protein sequence ID" value="ACA79473.1"/>
    <property type="molecule type" value="Genomic_DNA"/>
</dbReference>
<dbReference type="RefSeq" id="WP_000729117.1">
    <property type="nucleotide sequence ID" value="NZ_MTFT01000012.1"/>
</dbReference>
<dbReference type="SMR" id="B1ITQ5"/>
<dbReference type="GeneID" id="93777681"/>
<dbReference type="KEGG" id="ecl:EcolC_3869"/>
<dbReference type="HOGENOM" id="CLU_016503_3_0_6"/>
<dbReference type="GO" id="GO:0005737">
    <property type="term" value="C:cytoplasm"/>
    <property type="evidence" value="ECO:0007669"/>
    <property type="project" value="UniProtKB-SubCell"/>
</dbReference>
<dbReference type="GO" id="GO:0005524">
    <property type="term" value="F:ATP binding"/>
    <property type="evidence" value="ECO:0007669"/>
    <property type="project" value="UniProtKB-UniRule"/>
</dbReference>
<dbReference type="GO" id="GO:0140662">
    <property type="term" value="F:ATP-dependent protein folding chaperone"/>
    <property type="evidence" value="ECO:0007669"/>
    <property type="project" value="InterPro"/>
</dbReference>
<dbReference type="GO" id="GO:0016853">
    <property type="term" value="F:isomerase activity"/>
    <property type="evidence" value="ECO:0007669"/>
    <property type="project" value="UniProtKB-KW"/>
</dbReference>
<dbReference type="GO" id="GO:0051082">
    <property type="term" value="F:unfolded protein binding"/>
    <property type="evidence" value="ECO:0007669"/>
    <property type="project" value="UniProtKB-UniRule"/>
</dbReference>
<dbReference type="GO" id="GO:0042026">
    <property type="term" value="P:protein refolding"/>
    <property type="evidence" value="ECO:0007669"/>
    <property type="project" value="UniProtKB-UniRule"/>
</dbReference>
<dbReference type="CDD" id="cd03344">
    <property type="entry name" value="GroEL"/>
    <property type="match status" value="1"/>
</dbReference>
<dbReference type="FunFam" id="1.10.560.10:FF:000001">
    <property type="entry name" value="60 kDa chaperonin"/>
    <property type="match status" value="1"/>
</dbReference>
<dbReference type="FunFam" id="3.50.7.10:FF:000001">
    <property type="entry name" value="60 kDa chaperonin"/>
    <property type="match status" value="1"/>
</dbReference>
<dbReference type="Gene3D" id="3.50.7.10">
    <property type="entry name" value="GroEL"/>
    <property type="match status" value="1"/>
</dbReference>
<dbReference type="Gene3D" id="1.10.560.10">
    <property type="entry name" value="GroEL-like equatorial domain"/>
    <property type="match status" value="1"/>
</dbReference>
<dbReference type="Gene3D" id="3.30.260.10">
    <property type="entry name" value="TCP-1-like chaperonin intermediate domain"/>
    <property type="match status" value="1"/>
</dbReference>
<dbReference type="HAMAP" id="MF_00600">
    <property type="entry name" value="CH60"/>
    <property type="match status" value="1"/>
</dbReference>
<dbReference type="InterPro" id="IPR018370">
    <property type="entry name" value="Chaperonin_Cpn60_CS"/>
</dbReference>
<dbReference type="InterPro" id="IPR001844">
    <property type="entry name" value="Cpn60/GroEL"/>
</dbReference>
<dbReference type="InterPro" id="IPR002423">
    <property type="entry name" value="Cpn60/GroEL/TCP-1"/>
</dbReference>
<dbReference type="InterPro" id="IPR027409">
    <property type="entry name" value="GroEL-like_apical_dom_sf"/>
</dbReference>
<dbReference type="InterPro" id="IPR027413">
    <property type="entry name" value="GROEL-like_equatorial_sf"/>
</dbReference>
<dbReference type="InterPro" id="IPR027410">
    <property type="entry name" value="TCP-1-like_intermed_sf"/>
</dbReference>
<dbReference type="NCBIfam" id="TIGR02348">
    <property type="entry name" value="GroEL"/>
    <property type="match status" value="1"/>
</dbReference>
<dbReference type="NCBIfam" id="NF000592">
    <property type="entry name" value="PRK00013.1"/>
    <property type="match status" value="1"/>
</dbReference>
<dbReference type="NCBIfam" id="NF009487">
    <property type="entry name" value="PRK12849.1"/>
    <property type="match status" value="1"/>
</dbReference>
<dbReference type="NCBIfam" id="NF009488">
    <property type="entry name" value="PRK12850.1"/>
    <property type="match status" value="1"/>
</dbReference>
<dbReference type="NCBIfam" id="NF009489">
    <property type="entry name" value="PRK12851.1"/>
    <property type="match status" value="1"/>
</dbReference>
<dbReference type="PANTHER" id="PTHR45633">
    <property type="entry name" value="60 KDA HEAT SHOCK PROTEIN, MITOCHONDRIAL"/>
    <property type="match status" value="1"/>
</dbReference>
<dbReference type="Pfam" id="PF00118">
    <property type="entry name" value="Cpn60_TCP1"/>
    <property type="match status" value="1"/>
</dbReference>
<dbReference type="PRINTS" id="PR00298">
    <property type="entry name" value="CHAPERONIN60"/>
</dbReference>
<dbReference type="SUPFAM" id="SSF52029">
    <property type="entry name" value="GroEL apical domain-like"/>
    <property type="match status" value="1"/>
</dbReference>
<dbReference type="SUPFAM" id="SSF48592">
    <property type="entry name" value="GroEL equatorial domain-like"/>
    <property type="match status" value="1"/>
</dbReference>
<dbReference type="SUPFAM" id="SSF54849">
    <property type="entry name" value="GroEL-intermediate domain like"/>
    <property type="match status" value="1"/>
</dbReference>
<dbReference type="PROSITE" id="PS00296">
    <property type="entry name" value="CHAPERONINS_CPN60"/>
    <property type="match status" value="1"/>
</dbReference>
<organism>
    <name type="scientific">Escherichia coli (strain ATCC 8739 / DSM 1576 / NBRC 3972 / NCIMB 8545 / WDCM 00012 / Crooks)</name>
    <dbReference type="NCBI Taxonomy" id="481805"/>
    <lineage>
        <taxon>Bacteria</taxon>
        <taxon>Pseudomonadati</taxon>
        <taxon>Pseudomonadota</taxon>
        <taxon>Gammaproteobacteria</taxon>
        <taxon>Enterobacterales</taxon>
        <taxon>Enterobacteriaceae</taxon>
        <taxon>Escherichia</taxon>
    </lineage>
</organism>
<gene>
    <name evidence="1" type="primary">groEL</name>
    <name evidence="1" type="synonym">groL</name>
    <name type="ordered locus">EcolC_3869</name>
</gene>
<comment type="function">
    <text evidence="1">Together with its co-chaperonin GroES, plays an essential role in assisting protein folding. The GroEL-GroES system forms a nano-cage that allows encapsulation of the non-native substrate proteins and provides a physical environment optimized to promote and accelerate protein folding.</text>
</comment>
<comment type="catalytic activity">
    <reaction evidence="1">
        <text>ATP + H2O + a folded polypeptide = ADP + phosphate + an unfolded polypeptide.</text>
        <dbReference type="EC" id="5.6.1.7"/>
    </reaction>
</comment>
<comment type="subunit">
    <text evidence="1">Forms a cylinder of 14 subunits composed of two heptameric rings stacked back-to-back. Interacts with the co-chaperonin GroES.</text>
</comment>
<comment type="subcellular location">
    <subcellularLocation>
        <location evidence="1">Cytoplasm</location>
    </subcellularLocation>
</comment>
<comment type="similarity">
    <text evidence="1">Belongs to the chaperonin (HSP60) family.</text>
</comment>